<gene>
    <name type="primary">dppC</name>
    <name type="ordered locus">b3542</name>
    <name type="ordered locus">JW3511</name>
</gene>
<accession>P0AEG1</accession>
<accession>P37315</accession>
<accession>Q2M7K4</accession>
<evidence type="ECO:0000255" key="1"/>
<evidence type="ECO:0000255" key="2">
    <source>
        <dbReference type="PROSITE-ProRule" id="PRU00441"/>
    </source>
</evidence>
<evidence type="ECO:0000269" key="3">
    <source>
    </source>
</evidence>
<evidence type="ECO:0000269" key="4">
    <source>
    </source>
</evidence>
<evidence type="ECO:0000269" key="5">
    <source>
    </source>
</evidence>
<evidence type="ECO:0000269" key="6">
    <source>
    </source>
</evidence>
<evidence type="ECO:0000305" key="7"/>
<reference key="1">
    <citation type="journal article" date="1994" name="Mol. Microbiol.">
        <title>The dipeptide permease of Escherichia coli closely resembles other bacterial transport systems and shows growth-phase-dependent expression.</title>
        <authorList>
            <person name="Abouhamad W.N."/>
            <person name="Manson M.D."/>
        </authorList>
    </citation>
    <scope>NUCLEOTIDE SEQUENCE [GENOMIC DNA]</scope>
    <scope>FUNCTION</scope>
    <scope>SUBUNIT</scope>
    <source>
        <strain>K12 / MM500</strain>
    </source>
</reference>
<reference key="2">
    <citation type="journal article" date="1994" name="Nucleic Acids Res.">
        <title>Analysis of the Escherichia coli genome. V. DNA sequence of the region from 76.0 to 81.5 minutes.</title>
        <authorList>
            <person name="Sofia H.J."/>
            <person name="Burland V."/>
            <person name="Daniels D.L."/>
            <person name="Plunkett G. III"/>
            <person name="Blattner F.R."/>
        </authorList>
    </citation>
    <scope>NUCLEOTIDE SEQUENCE [LARGE SCALE GENOMIC DNA]</scope>
    <source>
        <strain>K12 / MG1655 / ATCC 47076</strain>
    </source>
</reference>
<reference key="3">
    <citation type="journal article" date="1997" name="Science">
        <title>The complete genome sequence of Escherichia coli K-12.</title>
        <authorList>
            <person name="Blattner F.R."/>
            <person name="Plunkett G. III"/>
            <person name="Bloch C.A."/>
            <person name="Perna N.T."/>
            <person name="Burland V."/>
            <person name="Riley M."/>
            <person name="Collado-Vides J."/>
            <person name="Glasner J.D."/>
            <person name="Rode C.K."/>
            <person name="Mayhew G.F."/>
            <person name="Gregor J."/>
            <person name="Davis N.W."/>
            <person name="Kirkpatrick H.A."/>
            <person name="Goeden M.A."/>
            <person name="Rose D.J."/>
            <person name="Mau B."/>
            <person name="Shao Y."/>
        </authorList>
    </citation>
    <scope>NUCLEOTIDE SEQUENCE [LARGE SCALE GENOMIC DNA]</scope>
    <source>
        <strain>K12 / MG1655 / ATCC 47076</strain>
    </source>
</reference>
<reference key="4">
    <citation type="journal article" date="2006" name="Mol. Syst. Biol.">
        <title>Highly accurate genome sequences of Escherichia coli K-12 strains MG1655 and W3110.</title>
        <authorList>
            <person name="Hayashi K."/>
            <person name="Morooka N."/>
            <person name="Yamamoto Y."/>
            <person name="Fujita K."/>
            <person name="Isono K."/>
            <person name="Choi S."/>
            <person name="Ohtsubo E."/>
            <person name="Baba T."/>
            <person name="Wanner B.L."/>
            <person name="Mori H."/>
            <person name="Horiuchi T."/>
        </authorList>
    </citation>
    <scope>NUCLEOTIDE SEQUENCE [LARGE SCALE GENOMIC DNA]</scope>
    <source>
        <strain>K12 / W3110 / ATCC 27325 / DSM 5911</strain>
    </source>
</reference>
<reference key="5">
    <citation type="journal article" date="1993" name="J. Bacteriol.">
        <title>The periplasmic dipeptide permease system transports 5-aminolevulinic acid in Escherichia coli.</title>
        <authorList>
            <person name="Verkamp E."/>
            <person name="Backman V.M."/>
            <person name="Bjoernsson J.M."/>
            <person name="Soell D."/>
            <person name="Eggertsson G."/>
        </authorList>
    </citation>
    <scope>FUNCTION IN 5-AMINOLEVULINIC ACID TRANSPORT</scope>
</reference>
<reference key="6">
    <citation type="journal article" date="2005" name="Science">
        <title>Global topology analysis of the Escherichia coli inner membrane proteome.</title>
        <authorList>
            <person name="Daley D.O."/>
            <person name="Rapp M."/>
            <person name="Granseth E."/>
            <person name="Melen K."/>
            <person name="Drew D."/>
            <person name="von Heijne G."/>
        </authorList>
    </citation>
    <scope>TOPOLOGY [LARGE SCALE ANALYSIS]</scope>
    <scope>SUBCELLULAR LOCATION</scope>
    <source>
        <strain>K12 / MG1655 / ATCC 47076</strain>
    </source>
</reference>
<reference key="7">
    <citation type="journal article" date="2006" name="Proc. Natl. Acad. Sci. U.S.A.">
        <title>The housekeeping dipeptide permease is the Escherichia coli heme transporter and functions with two optional peptide binding proteins.</title>
        <authorList>
            <person name="Letoffe S."/>
            <person name="Delepelaire P."/>
            <person name="Wandersman C."/>
        </authorList>
    </citation>
    <scope>FUNCTION IN HEME TRANSPORT</scope>
    <scope>SUBUNIT</scope>
    <scope>DISRUPTION PHENOTYPE</scope>
</reference>
<dbReference type="EMBL" id="L08399">
    <property type="protein sequence ID" value="AAA23704.1"/>
    <property type="molecule type" value="Genomic_DNA"/>
</dbReference>
<dbReference type="EMBL" id="U00039">
    <property type="protein sequence ID" value="AAB18520.1"/>
    <property type="molecule type" value="Genomic_DNA"/>
</dbReference>
<dbReference type="EMBL" id="U00096">
    <property type="protein sequence ID" value="AAC76567.1"/>
    <property type="molecule type" value="Genomic_DNA"/>
</dbReference>
<dbReference type="EMBL" id="AP009048">
    <property type="protein sequence ID" value="BAE77752.1"/>
    <property type="molecule type" value="Genomic_DNA"/>
</dbReference>
<dbReference type="PIR" id="S47764">
    <property type="entry name" value="S47764"/>
</dbReference>
<dbReference type="RefSeq" id="NP_417999.1">
    <property type="nucleotide sequence ID" value="NC_000913.3"/>
</dbReference>
<dbReference type="RefSeq" id="WP_000084677.1">
    <property type="nucleotide sequence ID" value="NZ_STEB01000018.1"/>
</dbReference>
<dbReference type="PDB" id="8Z1V">
    <property type="method" value="EM"/>
    <property type="resolution" value="3.16 A"/>
    <property type="chains" value="B=1-300"/>
</dbReference>
<dbReference type="PDB" id="8Z1W">
    <property type="method" value="EM"/>
    <property type="resolution" value="3.00 A"/>
    <property type="chains" value="B=1-300"/>
</dbReference>
<dbReference type="PDB" id="8Z1X">
    <property type="method" value="EM"/>
    <property type="resolution" value="3.20 A"/>
    <property type="chains" value="B=1-300"/>
</dbReference>
<dbReference type="PDB" id="8Z1Y">
    <property type="method" value="EM"/>
    <property type="resolution" value="2.73 A"/>
    <property type="chains" value="B=1-300"/>
</dbReference>
<dbReference type="PDBsum" id="8Z1V"/>
<dbReference type="PDBsum" id="8Z1W"/>
<dbReference type="PDBsum" id="8Z1X"/>
<dbReference type="PDBsum" id="8Z1Y"/>
<dbReference type="EMDB" id="EMD-39737"/>
<dbReference type="EMDB" id="EMD-39738"/>
<dbReference type="EMDB" id="EMD-39739"/>
<dbReference type="EMDB" id="EMD-39740"/>
<dbReference type="SMR" id="P0AEG1"/>
<dbReference type="BioGRID" id="4262184">
    <property type="interactions" value="334"/>
</dbReference>
<dbReference type="ComplexPortal" id="CPX-4345">
    <property type="entry name" value="Heme/dipeptide ABC transporter complex, dppA variant"/>
</dbReference>
<dbReference type="ComplexPortal" id="CPX-4346">
    <property type="entry name" value="Heme/dipeptide ABC transporter complex, mppA variant"/>
</dbReference>
<dbReference type="DIP" id="DIP-9469N"/>
<dbReference type="FunCoup" id="P0AEG1">
    <property type="interactions" value="293"/>
</dbReference>
<dbReference type="IntAct" id="P0AEG1">
    <property type="interactions" value="2"/>
</dbReference>
<dbReference type="STRING" id="511145.b3542"/>
<dbReference type="jPOST" id="P0AEG1"/>
<dbReference type="PaxDb" id="511145-b3542"/>
<dbReference type="EnsemblBacteria" id="AAC76567">
    <property type="protein sequence ID" value="AAC76567"/>
    <property type="gene ID" value="b3542"/>
</dbReference>
<dbReference type="GeneID" id="75201991"/>
<dbReference type="GeneID" id="948064"/>
<dbReference type="KEGG" id="ecj:JW3511"/>
<dbReference type="KEGG" id="eco:b3542"/>
<dbReference type="KEGG" id="ecoc:C3026_19195"/>
<dbReference type="PATRIC" id="fig|1411691.4.peg.3173"/>
<dbReference type="EchoBASE" id="EB2510"/>
<dbReference type="eggNOG" id="COG1173">
    <property type="taxonomic scope" value="Bacteria"/>
</dbReference>
<dbReference type="HOGENOM" id="CLU_028518_1_1_6"/>
<dbReference type="InParanoid" id="P0AEG1"/>
<dbReference type="OMA" id="IERAWWV"/>
<dbReference type="OrthoDB" id="9805884at2"/>
<dbReference type="PhylomeDB" id="P0AEG1"/>
<dbReference type="BioCyc" id="EcoCyc:DPPC-MONOMER"/>
<dbReference type="BioCyc" id="MetaCyc:DPPC-MONOMER"/>
<dbReference type="PRO" id="PR:P0AEG1"/>
<dbReference type="Proteomes" id="UP000000625">
    <property type="component" value="Chromosome"/>
</dbReference>
<dbReference type="GO" id="GO:0055052">
    <property type="term" value="C:ATP-binding cassette (ABC) transporter complex, substrate-binding subunit-containing"/>
    <property type="evidence" value="ECO:0000303"/>
    <property type="project" value="ComplexPortal"/>
</dbReference>
<dbReference type="GO" id="GO:0016020">
    <property type="term" value="C:membrane"/>
    <property type="evidence" value="ECO:0000303"/>
    <property type="project" value="ComplexPortal"/>
</dbReference>
<dbReference type="GO" id="GO:0005886">
    <property type="term" value="C:plasma membrane"/>
    <property type="evidence" value="ECO:0000314"/>
    <property type="project" value="EcoCyc"/>
</dbReference>
<dbReference type="GO" id="GO:0071916">
    <property type="term" value="F:dipeptide transmembrane transporter activity"/>
    <property type="evidence" value="ECO:0000318"/>
    <property type="project" value="GO_Central"/>
</dbReference>
<dbReference type="GO" id="GO:0042938">
    <property type="term" value="P:dipeptide transport"/>
    <property type="evidence" value="ECO:0000303"/>
    <property type="project" value="ComplexPortal"/>
</dbReference>
<dbReference type="GO" id="GO:0035351">
    <property type="term" value="P:heme transmembrane transport"/>
    <property type="evidence" value="ECO:0000303"/>
    <property type="project" value="ComplexPortal"/>
</dbReference>
<dbReference type="GO" id="GO:0015031">
    <property type="term" value="P:protein transport"/>
    <property type="evidence" value="ECO:0007669"/>
    <property type="project" value="UniProtKB-KW"/>
</dbReference>
<dbReference type="CDD" id="cd06261">
    <property type="entry name" value="TM_PBP2"/>
    <property type="match status" value="1"/>
</dbReference>
<dbReference type="FunFam" id="1.10.3720.10:FF:000007">
    <property type="entry name" value="Dipeptide ABC transporter permease DppC"/>
    <property type="match status" value="1"/>
</dbReference>
<dbReference type="Gene3D" id="1.10.3720.10">
    <property type="entry name" value="MetI-like"/>
    <property type="match status" value="1"/>
</dbReference>
<dbReference type="InterPro" id="IPR050366">
    <property type="entry name" value="BP-dependent_transpt_permease"/>
</dbReference>
<dbReference type="InterPro" id="IPR000515">
    <property type="entry name" value="MetI-like"/>
</dbReference>
<dbReference type="InterPro" id="IPR035906">
    <property type="entry name" value="MetI-like_sf"/>
</dbReference>
<dbReference type="InterPro" id="IPR025966">
    <property type="entry name" value="OppC_N"/>
</dbReference>
<dbReference type="NCBIfam" id="NF008160">
    <property type="entry name" value="PRK10913.1"/>
    <property type="match status" value="1"/>
</dbReference>
<dbReference type="PANTHER" id="PTHR43386:SF1">
    <property type="entry name" value="D,D-DIPEPTIDE TRANSPORT SYSTEM PERMEASE PROTEIN DDPC-RELATED"/>
    <property type="match status" value="1"/>
</dbReference>
<dbReference type="PANTHER" id="PTHR43386">
    <property type="entry name" value="OLIGOPEPTIDE TRANSPORT SYSTEM PERMEASE PROTEIN APPC"/>
    <property type="match status" value="1"/>
</dbReference>
<dbReference type="Pfam" id="PF00528">
    <property type="entry name" value="BPD_transp_1"/>
    <property type="match status" value="1"/>
</dbReference>
<dbReference type="Pfam" id="PF12911">
    <property type="entry name" value="OppC_N"/>
    <property type="match status" value="1"/>
</dbReference>
<dbReference type="SUPFAM" id="SSF161098">
    <property type="entry name" value="MetI-like"/>
    <property type="match status" value="1"/>
</dbReference>
<dbReference type="PROSITE" id="PS50928">
    <property type="entry name" value="ABC_TM1"/>
    <property type="match status" value="1"/>
</dbReference>
<protein>
    <recommendedName>
        <fullName evidence="7">Dipeptide transport system permease protein DppC</fullName>
    </recommendedName>
</protein>
<keyword id="KW-0002">3D-structure</keyword>
<keyword id="KW-0997">Cell inner membrane</keyword>
<keyword id="KW-1003">Cell membrane</keyword>
<keyword id="KW-0472">Membrane</keyword>
<keyword id="KW-0571">Peptide transport</keyword>
<keyword id="KW-0653">Protein transport</keyword>
<keyword id="KW-1185">Reference proteome</keyword>
<keyword id="KW-0812">Transmembrane</keyword>
<keyword id="KW-1133">Transmembrane helix</keyword>
<keyword id="KW-0813">Transport</keyword>
<sequence length="300" mass="32308">MSQVTENKVISAPVPMTPLQEFWHYFKRNKGAVVGLVYVVIVLFIAIFANWIAPYNPAEQFRDALLAPPAWQEGGSMAHLLGTDDVGRDVLSRLMYGARLSLLVGCLVVVLSLIMGVILGLIAGYFGGLVDNIIMRVVDIMLALPSLLLALVLVAIFGPSIGNAALALTFVALPHYVRLTRAAVLVEVNRDYVTASRVAGAGAMRQMFINIFPNCLAPLIVQASLGFSNAILDMAALGFLGMGAQPPTPEWGTMLSDVLQFAQSAWWVVTFPGLAILLTVLAFNLMGDGLRDALDPKLKQ</sequence>
<organism>
    <name type="scientific">Escherichia coli (strain K12)</name>
    <dbReference type="NCBI Taxonomy" id="83333"/>
    <lineage>
        <taxon>Bacteria</taxon>
        <taxon>Pseudomonadati</taxon>
        <taxon>Pseudomonadota</taxon>
        <taxon>Gammaproteobacteria</taxon>
        <taxon>Enterobacterales</taxon>
        <taxon>Enterobacteriaceae</taxon>
        <taxon>Escherichia</taxon>
    </lineage>
</organism>
<comment type="function">
    <text evidence="5 7">Part of the ABC transporter DppABCDF involved in dipeptide transport (PubMed:7536291). Responsible for the translocation of the substrate across the membrane (Probable).</text>
</comment>
<comment type="function">
    <text evidence="4 6">When a foreign outer membrane heme receptor is expressed in E.coli, DppABCDF can also transport heme and its precursor, 5-aminolevulinic acid (ALA), from the periplasm into the cytoplasm.</text>
</comment>
<comment type="subunit">
    <text evidence="4 5">The complex is composed of two ATP-binding proteins (DppD and DppF), two transmembrane proteins (DppB and DppC) and a solute-binding protein (DppA) (PubMed:16905647, PubMed:7536291). MppA can replace DppA as binding protein for heme and ALA transport (PubMed:16905647).</text>
</comment>
<comment type="subcellular location">
    <subcellularLocation>
        <location evidence="3">Cell inner membrane</location>
        <topology>Multi-pass membrane protein</topology>
    </subcellularLocation>
</comment>
<comment type="disruption phenotype">
    <text evidence="4">Inactivation of the gene abolishes use of heme as an iron source.</text>
</comment>
<comment type="similarity">
    <text evidence="7">Belongs to the binding-protein-dependent transport system permease family. OppBC subfamily.</text>
</comment>
<name>DPPC_ECOLI</name>
<proteinExistence type="evidence at protein level"/>
<feature type="chain" id="PRO_0000060009" description="Dipeptide transport system permease protein DppC">
    <location>
        <begin position="1"/>
        <end position="300"/>
    </location>
</feature>
<feature type="topological domain" description="Cytoplasmic" evidence="1">
    <location>
        <begin position="1"/>
        <end position="31"/>
    </location>
</feature>
<feature type="transmembrane region" description="Helical" evidence="2">
    <location>
        <begin position="32"/>
        <end position="52"/>
    </location>
</feature>
<feature type="topological domain" description="Periplasmic" evidence="1">
    <location>
        <begin position="53"/>
        <end position="101"/>
    </location>
</feature>
<feature type="transmembrane region" description="Helical" evidence="2">
    <location>
        <begin position="102"/>
        <end position="122"/>
    </location>
</feature>
<feature type="topological domain" description="Cytoplasmic" evidence="1">
    <location>
        <begin position="123"/>
        <end position="136"/>
    </location>
</feature>
<feature type="transmembrane region" description="Helical" evidence="2">
    <location>
        <begin position="137"/>
        <end position="157"/>
    </location>
</feature>
<feature type="topological domain" description="Periplasmic" evidence="1">
    <location>
        <begin position="158"/>
        <end position="206"/>
    </location>
</feature>
<feature type="transmembrane region" description="Helical" evidence="2">
    <location>
        <begin position="207"/>
        <end position="227"/>
    </location>
</feature>
<feature type="topological domain" description="Cytoplasmic" evidence="1">
    <location>
        <begin position="228"/>
        <end position="230"/>
    </location>
</feature>
<feature type="transmembrane region" description="Helical" evidence="2">
    <location>
        <begin position="231"/>
        <end position="251"/>
    </location>
</feature>
<feature type="topological domain" description="Periplasmic" evidence="1">
    <location>
        <begin position="252"/>
        <end position="265"/>
    </location>
</feature>
<feature type="transmembrane region" description="Helical" evidence="2">
    <location>
        <begin position="266"/>
        <end position="286"/>
    </location>
</feature>
<feature type="topological domain" description="Cytoplasmic" evidence="1">
    <location>
        <begin position="287"/>
        <end position="300"/>
    </location>
</feature>
<feature type="domain" description="ABC transmembrane type-1" evidence="2">
    <location>
        <begin position="98"/>
        <end position="287"/>
    </location>
</feature>